<organism>
    <name type="scientific">Streptococcus pyogenes serotype M5 (strain Manfredo)</name>
    <dbReference type="NCBI Taxonomy" id="160491"/>
    <lineage>
        <taxon>Bacteria</taxon>
        <taxon>Bacillati</taxon>
        <taxon>Bacillota</taxon>
        <taxon>Bacilli</taxon>
        <taxon>Lactobacillales</taxon>
        <taxon>Streptococcaceae</taxon>
        <taxon>Streptococcus</taxon>
    </lineage>
</organism>
<comment type="function">
    <text evidence="1">Phosphorylation of dTMP to form dTDP in both de novo and salvage pathways of dTTP synthesis.</text>
</comment>
<comment type="catalytic activity">
    <reaction evidence="1">
        <text>dTMP + ATP = dTDP + ADP</text>
        <dbReference type="Rhea" id="RHEA:13517"/>
        <dbReference type="ChEBI" id="CHEBI:30616"/>
        <dbReference type="ChEBI" id="CHEBI:58369"/>
        <dbReference type="ChEBI" id="CHEBI:63528"/>
        <dbReference type="ChEBI" id="CHEBI:456216"/>
        <dbReference type="EC" id="2.7.4.9"/>
    </reaction>
</comment>
<comment type="similarity">
    <text evidence="1">Belongs to the thymidylate kinase family.</text>
</comment>
<protein>
    <recommendedName>
        <fullName evidence="1">Thymidylate kinase</fullName>
        <ecNumber evidence="1">2.7.4.9</ecNumber>
    </recommendedName>
    <alternativeName>
        <fullName evidence="1">dTMP kinase</fullName>
    </alternativeName>
</protein>
<keyword id="KW-0067">ATP-binding</keyword>
<keyword id="KW-0418">Kinase</keyword>
<keyword id="KW-0545">Nucleotide biosynthesis</keyword>
<keyword id="KW-0547">Nucleotide-binding</keyword>
<keyword id="KW-0808">Transferase</keyword>
<sequence length="211" mass="23456">MITGKLITVEGPDGAGKTTVLEQLIPPLKQKVAQEILTTREPGGVAISEYIRELILDINHTTMDPKTELLLYIAARRQHLVEKVLPALEAGQLVFIDRFIDSSVAYQGAGRGLIKADIQWLNEFATDGLEPDLTLYFDVPSEIGLARINANQQREVNRLDLETIEIHQRVRKGYLALAKEHPKRIVTIDATKPLKEVVSVALEHVLALLLA</sequence>
<proteinExistence type="inferred from homology"/>
<dbReference type="EC" id="2.7.4.9" evidence="1"/>
<dbReference type="EMBL" id="AM295007">
    <property type="protein sequence ID" value="CAM30849.1"/>
    <property type="molecule type" value="Genomic_DNA"/>
</dbReference>
<dbReference type="RefSeq" id="WP_011017420.1">
    <property type="nucleotide sequence ID" value="NC_009332.1"/>
</dbReference>
<dbReference type="SMR" id="A2RG70"/>
<dbReference type="KEGG" id="spf:SpyM51528"/>
<dbReference type="HOGENOM" id="CLU_049131_0_2_9"/>
<dbReference type="GO" id="GO:0005829">
    <property type="term" value="C:cytosol"/>
    <property type="evidence" value="ECO:0007669"/>
    <property type="project" value="TreeGrafter"/>
</dbReference>
<dbReference type="GO" id="GO:0005524">
    <property type="term" value="F:ATP binding"/>
    <property type="evidence" value="ECO:0007669"/>
    <property type="project" value="UniProtKB-UniRule"/>
</dbReference>
<dbReference type="GO" id="GO:0004798">
    <property type="term" value="F:dTMP kinase activity"/>
    <property type="evidence" value="ECO:0007669"/>
    <property type="project" value="UniProtKB-UniRule"/>
</dbReference>
<dbReference type="GO" id="GO:0006233">
    <property type="term" value="P:dTDP biosynthetic process"/>
    <property type="evidence" value="ECO:0007669"/>
    <property type="project" value="InterPro"/>
</dbReference>
<dbReference type="GO" id="GO:0006235">
    <property type="term" value="P:dTTP biosynthetic process"/>
    <property type="evidence" value="ECO:0007669"/>
    <property type="project" value="UniProtKB-UniRule"/>
</dbReference>
<dbReference type="GO" id="GO:0006227">
    <property type="term" value="P:dUDP biosynthetic process"/>
    <property type="evidence" value="ECO:0007669"/>
    <property type="project" value="TreeGrafter"/>
</dbReference>
<dbReference type="CDD" id="cd01672">
    <property type="entry name" value="TMPK"/>
    <property type="match status" value="1"/>
</dbReference>
<dbReference type="FunFam" id="3.40.50.300:FF:000225">
    <property type="entry name" value="Thymidylate kinase"/>
    <property type="match status" value="1"/>
</dbReference>
<dbReference type="Gene3D" id="3.40.50.300">
    <property type="entry name" value="P-loop containing nucleotide triphosphate hydrolases"/>
    <property type="match status" value="1"/>
</dbReference>
<dbReference type="HAMAP" id="MF_00165">
    <property type="entry name" value="Thymidylate_kinase"/>
    <property type="match status" value="1"/>
</dbReference>
<dbReference type="InterPro" id="IPR027417">
    <property type="entry name" value="P-loop_NTPase"/>
</dbReference>
<dbReference type="InterPro" id="IPR039430">
    <property type="entry name" value="Thymidylate_kin-like_dom"/>
</dbReference>
<dbReference type="InterPro" id="IPR018094">
    <property type="entry name" value="Thymidylate_kinase"/>
</dbReference>
<dbReference type="NCBIfam" id="TIGR00041">
    <property type="entry name" value="DTMP_kinase"/>
    <property type="match status" value="1"/>
</dbReference>
<dbReference type="PANTHER" id="PTHR10344">
    <property type="entry name" value="THYMIDYLATE KINASE"/>
    <property type="match status" value="1"/>
</dbReference>
<dbReference type="PANTHER" id="PTHR10344:SF4">
    <property type="entry name" value="UMP-CMP KINASE 2, MITOCHONDRIAL"/>
    <property type="match status" value="1"/>
</dbReference>
<dbReference type="Pfam" id="PF02223">
    <property type="entry name" value="Thymidylate_kin"/>
    <property type="match status" value="1"/>
</dbReference>
<dbReference type="SUPFAM" id="SSF52540">
    <property type="entry name" value="P-loop containing nucleoside triphosphate hydrolases"/>
    <property type="match status" value="1"/>
</dbReference>
<name>KTHY_STRPG</name>
<reference key="1">
    <citation type="journal article" date="2007" name="J. Bacteriol.">
        <title>Complete genome of acute rheumatic fever-associated serotype M5 Streptococcus pyogenes strain Manfredo.</title>
        <authorList>
            <person name="Holden M.T.G."/>
            <person name="Scott A."/>
            <person name="Cherevach I."/>
            <person name="Chillingworth T."/>
            <person name="Churcher C."/>
            <person name="Cronin A."/>
            <person name="Dowd L."/>
            <person name="Feltwell T."/>
            <person name="Hamlin N."/>
            <person name="Holroyd S."/>
            <person name="Jagels K."/>
            <person name="Moule S."/>
            <person name="Mungall K."/>
            <person name="Quail M.A."/>
            <person name="Price C."/>
            <person name="Rabbinowitsch E."/>
            <person name="Sharp S."/>
            <person name="Skelton J."/>
            <person name="Whitehead S."/>
            <person name="Barrell B.G."/>
            <person name="Kehoe M."/>
            <person name="Parkhill J."/>
        </authorList>
    </citation>
    <scope>NUCLEOTIDE SEQUENCE [LARGE SCALE GENOMIC DNA]</scope>
    <source>
        <strain>Manfredo</strain>
    </source>
</reference>
<evidence type="ECO:0000255" key="1">
    <source>
        <dbReference type="HAMAP-Rule" id="MF_00165"/>
    </source>
</evidence>
<feature type="chain" id="PRO_1000023295" description="Thymidylate kinase">
    <location>
        <begin position="1"/>
        <end position="211"/>
    </location>
</feature>
<feature type="binding site" evidence="1">
    <location>
        <begin position="11"/>
        <end position="18"/>
    </location>
    <ligand>
        <name>ATP</name>
        <dbReference type="ChEBI" id="CHEBI:30616"/>
    </ligand>
</feature>
<accession>A2RG70</accession>
<gene>
    <name evidence="1" type="primary">tmk</name>
    <name type="ordered locus">SpyM51528</name>
</gene>